<organism>
    <name type="scientific">Homo sapiens</name>
    <name type="common">Human</name>
    <dbReference type="NCBI Taxonomy" id="9606"/>
    <lineage>
        <taxon>Eukaryota</taxon>
        <taxon>Metazoa</taxon>
        <taxon>Chordata</taxon>
        <taxon>Craniata</taxon>
        <taxon>Vertebrata</taxon>
        <taxon>Euteleostomi</taxon>
        <taxon>Mammalia</taxon>
        <taxon>Eutheria</taxon>
        <taxon>Euarchontoglires</taxon>
        <taxon>Primates</taxon>
        <taxon>Haplorrhini</taxon>
        <taxon>Catarrhini</taxon>
        <taxon>Hominidae</taxon>
        <taxon>Homo</taxon>
    </lineage>
</organism>
<keyword id="KW-1003">Cell membrane</keyword>
<keyword id="KW-1015">Disulfide bond</keyword>
<keyword id="KW-0297">G-protein coupled receptor</keyword>
<keyword id="KW-0325">Glycoprotein</keyword>
<keyword id="KW-0472">Membrane</keyword>
<keyword id="KW-0552">Olfaction</keyword>
<keyword id="KW-0675">Receptor</keyword>
<keyword id="KW-1185">Reference proteome</keyword>
<keyword id="KW-0716">Sensory transduction</keyword>
<keyword id="KW-0807">Transducer</keyword>
<keyword id="KW-0812">Transmembrane</keyword>
<keyword id="KW-1133">Transmembrane helix</keyword>
<reference key="1">
    <citation type="submission" date="2001-07" db="EMBL/GenBank/DDBJ databases">
        <title>Genome-wide discovery and analysis of human seven transmembrane helix receptor genes.</title>
        <authorList>
            <person name="Suwa M."/>
            <person name="Sato T."/>
            <person name="Okouchi I."/>
            <person name="Arita M."/>
            <person name="Futami K."/>
            <person name="Matsumoto S."/>
            <person name="Tsutsumi S."/>
            <person name="Aburatani H."/>
            <person name="Asai K."/>
            <person name="Akiyama Y."/>
        </authorList>
    </citation>
    <scope>NUCLEOTIDE SEQUENCE [GENOMIC DNA]</scope>
</reference>
<dbReference type="EMBL" id="AB065497">
    <property type="protein sequence ID" value="BAC05748.1"/>
    <property type="molecule type" value="Genomic_DNA"/>
</dbReference>
<dbReference type="SMR" id="Q8NH89"/>
<dbReference type="GlyCosmos" id="Q8NH89">
    <property type="glycosylation" value="3 sites, No reported glycans"/>
</dbReference>
<dbReference type="GlyGen" id="Q8NH89">
    <property type="glycosylation" value="3 sites"/>
</dbReference>
<dbReference type="BioMuta" id="HGNC:15252"/>
<dbReference type="DMDM" id="38372828"/>
<dbReference type="MassIVE" id="Q8NH89"/>
<dbReference type="ProteomicsDB" id="73686"/>
<dbReference type="AGR" id="HGNC:15252"/>
<dbReference type="GeneCards" id="OR5AK3P"/>
<dbReference type="HGNC" id="HGNC:15252">
    <property type="gene designation" value="OR5AK3P"/>
</dbReference>
<dbReference type="neXtProt" id="NX_Q8NH89"/>
<dbReference type="InParanoid" id="Q8NH89"/>
<dbReference type="OrthoDB" id="9442673at2759"/>
<dbReference type="PAN-GO" id="Q8NH89">
    <property type="GO annotations" value="4 GO annotations based on evolutionary models"/>
</dbReference>
<dbReference type="PhylomeDB" id="Q8NH89"/>
<dbReference type="PathwayCommons" id="Q8NH89"/>
<dbReference type="Pharos" id="Q8NH89">
    <property type="development level" value="Tdark"/>
</dbReference>
<dbReference type="Proteomes" id="UP000005640">
    <property type="component" value="Unplaced"/>
</dbReference>
<dbReference type="RNAct" id="Q8NH89">
    <property type="molecule type" value="protein"/>
</dbReference>
<dbReference type="GO" id="GO:0005886">
    <property type="term" value="C:plasma membrane"/>
    <property type="evidence" value="ECO:0007669"/>
    <property type="project" value="UniProtKB-SubCell"/>
</dbReference>
<dbReference type="GO" id="GO:0004930">
    <property type="term" value="F:G protein-coupled receptor activity"/>
    <property type="evidence" value="ECO:0007669"/>
    <property type="project" value="UniProtKB-KW"/>
</dbReference>
<dbReference type="GO" id="GO:0005549">
    <property type="term" value="F:odorant binding"/>
    <property type="evidence" value="ECO:0000318"/>
    <property type="project" value="GO_Central"/>
</dbReference>
<dbReference type="GO" id="GO:0004984">
    <property type="term" value="F:olfactory receptor activity"/>
    <property type="evidence" value="ECO:0000318"/>
    <property type="project" value="GO_Central"/>
</dbReference>
<dbReference type="GO" id="GO:0007186">
    <property type="term" value="P:G protein-coupled receptor signaling pathway"/>
    <property type="evidence" value="ECO:0000318"/>
    <property type="project" value="GO_Central"/>
</dbReference>
<dbReference type="GO" id="GO:0007608">
    <property type="term" value="P:sensory perception of smell"/>
    <property type="evidence" value="ECO:0000318"/>
    <property type="project" value="GO_Central"/>
</dbReference>
<dbReference type="CDD" id="cd15408">
    <property type="entry name" value="7tmA_OR5AK3-like"/>
    <property type="match status" value="1"/>
</dbReference>
<dbReference type="FunFam" id="1.10.1220.70:FF:000001">
    <property type="entry name" value="Olfactory receptor"/>
    <property type="match status" value="1"/>
</dbReference>
<dbReference type="FunFam" id="1.20.1070.10:FF:000003">
    <property type="entry name" value="Olfactory receptor"/>
    <property type="match status" value="1"/>
</dbReference>
<dbReference type="Gene3D" id="1.20.1070.10">
    <property type="entry name" value="Rhodopsin 7-helix transmembrane proteins"/>
    <property type="match status" value="1"/>
</dbReference>
<dbReference type="InterPro" id="IPR000276">
    <property type="entry name" value="GPCR_Rhodpsn"/>
</dbReference>
<dbReference type="InterPro" id="IPR017452">
    <property type="entry name" value="GPCR_Rhodpsn_7TM"/>
</dbReference>
<dbReference type="InterPro" id="IPR000725">
    <property type="entry name" value="Olfact_rcpt"/>
</dbReference>
<dbReference type="PANTHER" id="PTHR48018">
    <property type="entry name" value="OLFACTORY RECEPTOR"/>
    <property type="match status" value="1"/>
</dbReference>
<dbReference type="Pfam" id="PF13853">
    <property type="entry name" value="7tm_4"/>
    <property type="match status" value="1"/>
</dbReference>
<dbReference type="PRINTS" id="PR00237">
    <property type="entry name" value="GPCRRHODOPSN"/>
</dbReference>
<dbReference type="PRINTS" id="PR00245">
    <property type="entry name" value="OLFACTORYR"/>
</dbReference>
<dbReference type="SUPFAM" id="SSF81321">
    <property type="entry name" value="Family A G protein-coupled receptor-like"/>
    <property type="match status" value="1"/>
</dbReference>
<dbReference type="PROSITE" id="PS50262">
    <property type="entry name" value="G_PROTEIN_RECEP_F1_2"/>
    <property type="match status" value="1"/>
</dbReference>
<proteinExistence type="inferred from homology"/>
<evidence type="ECO:0000255" key="1"/>
<evidence type="ECO:0000255" key="2">
    <source>
        <dbReference type="PROSITE-ProRule" id="PRU00521"/>
    </source>
</evidence>
<evidence type="ECO:0000305" key="3"/>
<sequence>MGRGNSTEVTEFHLLGFGVQHEFQHVLFIVLLLIYVTSLIGNIGMILLIKTDSRLQTPMYFFPQHLAFVDICYTSAITPKMLQSFTEENNLITFRGCVIQFLVYATFATSDCYLLAIMAMDCYVAICKPLRYPMIMSQTVYIQLVAGSYIIGSINASVHTGFTFSLSFCKSNKINHFFCDGLPILALSCSNIDINIILDVVFVGFDLMFTELVIIFSYIYIMVTILKMSSTAGRKKSFSTCASHLTAVTIFYGTLSYMYLQPQSNNSQENMKVASIFYGTVIPMLNPLIYSLRNKEGK</sequence>
<feature type="chain" id="PRO_0000150576" description="Olfactory receptor 5AK3">
    <location>
        <begin position="1"/>
        <end position="298"/>
    </location>
</feature>
<feature type="topological domain" description="Extracellular" evidence="1">
    <location>
        <begin position="1"/>
        <end position="25"/>
    </location>
</feature>
<feature type="transmembrane region" description="Helical; Name=1" evidence="1">
    <location>
        <begin position="26"/>
        <end position="46"/>
    </location>
</feature>
<feature type="topological domain" description="Cytoplasmic" evidence="1">
    <location>
        <begin position="47"/>
        <end position="54"/>
    </location>
</feature>
<feature type="transmembrane region" description="Helical; Name=2" evidence="1">
    <location>
        <begin position="55"/>
        <end position="75"/>
    </location>
</feature>
<feature type="topological domain" description="Extracellular" evidence="1">
    <location>
        <begin position="76"/>
        <end position="99"/>
    </location>
</feature>
<feature type="transmembrane region" description="Helical; Name=3" evidence="1">
    <location>
        <begin position="100"/>
        <end position="120"/>
    </location>
</feature>
<feature type="topological domain" description="Cytoplasmic" evidence="1">
    <location>
        <begin position="121"/>
        <end position="133"/>
    </location>
</feature>
<feature type="transmembrane region" description="Helical; Name=4" evidence="1">
    <location>
        <begin position="134"/>
        <end position="154"/>
    </location>
</feature>
<feature type="topological domain" description="Extracellular" evidence="1">
    <location>
        <begin position="155"/>
        <end position="196"/>
    </location>
</feature>
<feature type="transmembrane region" description="Helical; Name=5" evidence="1">
    <location>
        <begin position="197"/>
        <end position="217"/>
    </location>
</feature>
<feature type="topological domain" description="Cytoplasmic" evidence="1">
    <location>
        <begin position="218"/>
        <end position="237"/>
    </location>
</feature>
<feature type="transmembrane region" description="Helical; Name=6" evidence="1">
    <location>
        <begin position="238"/>
        <end position="258"/>
    </location>
</feature>
<feature type="topological domain" description="Extracellular" evidence="1">
    <location>
        <begin position="259"/>
        <end position="271"/>
    </location>
</feature>
<feature type="transmembrane region" description="Helical; Name=7" evidence="1">
    <location>
        <begin position="272"/>
        <end position="292"/>
    </location>
</feature>
<feature type="topological domain" description="Cytoplasmic" evidence="1">
    <location>
        <begin position="293"/>
        <end position="298"/>
    </location>
</feature>
<feature type="glycosylation site" description="N-linked (GlcNAc...) asparagine" evidence="1">
    <location>
        <position position="5"/>
    </location>
</feature>
<feature type="glycosylation site" description="N-linked (GlcNAc...) asparagine" evidence="1">
    <location>
        <position position="155"/>
    </location>
</feature>
<feature type="glycosylation site" description="N-linked (GlcNAc...) asparagine" evidence="1">
    <location>
        <position position="265"/>
    </location>
</feature>
<feature type="disulfide bond" evidence="2">
    <location>
        <begin position="97"/>
        <end position="189"/>
    </location>
</feature>
<accession>Q8NH89</accession>
<comment type="function">
    <text evidence="3">Odorant receptor.</text>
</comment>
<comment type="subcellular location">
    <subcellularLocation>
        <location>Cell membrane</location>
        <topology>Multi-pass membrane protein</topology>
    </subcellularLocation>
</comment>
<comment type="similarity">
    <text evidence="2">Belongs to the G-protein coupled receptor 1 family.</text>
</comment>
<comment type="online information" name="Human Olfactory Receptor Data Exploratorium (HORDE)">
    <link uri="http://genome.weizmann.ac.il/horde/card/index/symbol:OR5AK3P"/>
</comment>
<protein>
    <recommendedName>
        <fullName>Olfactory receptor 5AK3</fullName>
    </recommendedName>
</protein>
<gene>
    <name type="primary">OR5AK3P</name>
    <name type="synonym">OR5AK3</name>
</gene>
<name>O5AK3_HUMAN</name>